<name>RL18_METTH</name>
<organism>
    <name type="scientific">Methanothermobacter thermautotrophicus (strain ATCC 29096 / DSM 1053 / JCM 10044 / NBRC 100330 / Delta H)</name>
    <name type="common">Methanobacterium thermoautotrophicum</name>
    <dbReference type="NCBI Taxonomy" id="187420"/>
    <lineage>
        <taxon>Archaea</taxon>
        <taxon>Methanobacteriati</taxon>
        <taxon>Methanobacteriota</taxon>
        <taxon>Methanomada group</taxon>
        <taxon>Methanobacteria</taxon>
        <taxon>Methanobacteriales</taxon>
        <taxon>Methanobacteriaceae</taxon>
        <taxon>Methanothermobacter</taxon>
    </lineage>
</organism>
<comment type="function">
    <text evidence="1">This is one of the proteins that bind and probably mediate the attachment of the 5S RNA into the large ribosomal subunit, where it forms part of the central protuberance.</text>
</comment>
<comment type="subunit">
    <text evidence="1">Part of the 50S ribosomal subunit. Contacts the 5S and 23S rRNAs.</text>
</comment>
<comment type="similarity">
    <text evidence="1">Belongs to the universal ribosomal protein uL18 family.</text>
</comment>
<feature type="chain" id="PRO_0000131409" description="Large ribosomal subunit protein uL18">
    <location>
        <begin position="1"/>
        <end position="192"/>
    </location>
</feature>
<evidence type="ECO:0000255" key="1">
    <source>
        <dbReference type="HAMAP-Rule" id="MF_01337"/>
    </source>
</evidence>
<evidence type="ECO:0000305" key="2"/>
<proteinExistence type="inferred from homology"/>
<gene>
    <name evidence="1" type="primary">rpl18</name>
    <name type="ordered locus">MTH_22</name>
</gene>
<dbReference type="EMBL" id="AE000666">
    <property type="protein sequence ID" value="AAB84531.1"/>
    <property type="molecule type" value="Genomic_DNA"/>
</dbReference>
<dbReference type="PIR" id="B69127">
    <property type="entry name" value="B69127"/>
</dbReference>
<dbReference type="RefSeq" id="WP_010875664.1">
    <property type="nucleotide sequence ID" value="NC_000916.1"/>
</dbReference>
<dbReference type="SMR" id="O26130"/>
<dbReference type="FunCoup" id="O26130">
    <property type="interactions" value="175"/>
</dbReference>
<dbReference type="STRING" id="187420.MTH_22"/>
<dbReference type="PaxDb" id="187420-MTH_22"/>
<dbReference type="EnsemblBacteria" id="AAB84531">
    <property type="protein sequence ID" value="AAB84531"/>
    <property type="gene ID" value="MTH_22"/>
</dbReference>
<dbReference type="KEGG" id="mth:MTH_22"/>
<dbReference type="PATRIC" id="fig|187420.15.peg.22"/>
<dbReference type="HOGENOM" id="CLU_056222_2_0_2"/>
<dbReference type="InParanoid" id="O26130"/>
<dbReference type="Proteomes" id="UP000005223">
    <property type="component" value="Chromosome"/>
</dbReference>
<dbReference type="GO" id="GO:0022625">
    <property type="term" value="C:cytosolic large ribosomal subunit"/>
    <property type="evidence" value="ECO:0007669"/>
    <property type="project" value="TreeGrafter"/>
</dbReference>
<dbReference type="GO" id="GO:0008097">
    <property type="term" value="F:5S rRNA binding"/>
    <property type="evidence" value="ECO:0007669"/>
    <property type="project" value="InterPro"/>
</dbReference>
<dbReference type="GO" id="GO:0003735">
    <property type="term" value="F:structural constituent of ribosome"/>
    <property type="evidence" value="ECO:0007669"/>
    <property type="project" value="InterPro"/>
</dbReference>
<dbReference type="GO" id="GO:0000027">
    <property type="term" value="P:ribosomal large subunit assembly"/>
    <property type="evidence" value="ECO:0007669"/>
    <property type="project" value="TreeGrafter"/>
</dbReference>
<dbReference type="GO" id="GO:0006412">
    <property type="term" value="P:translation"/>
    <property type="evidence" value="ECO:0007669"/>
    <property type="project" value="UniProtKB-UniRule"/>
</dbReference>
<dbReference type="CDD" id="cd00432">
    <property type="entry name" value="Ribosomal_L18_L5e"/>
    <property type="match status" value="1"/>
</dbReference>
<dbReference type="Gene3D" id="3.30.420.100">
    <property type="match status" value="1"/>
</dbReference>
<dbReference type="HAMAP" id="MF_01337_A">
    <property type="entry name" value="Ribosomal_uL18_A"/>
    <property type="match status" value="1"/>
</dbReference>
<dbReference type="InterPro" id="IPR005485">
    <property type="entry name" value="Rbsml_uL18_euk"/>
</dbReference>
<dbReference type="NCBIfam" id="NF006342">
    <property type="entry name" value="PRK08569.1"/>
    <property type="match status" value="1"/>
</dbReference>
<dbReference type="PANTHER" id="PTHR23410:SF12">
    <property type="entry name" value="LARGE RIBOSOMAL SUBUNIT PROTEIN UL18"/>
    <property type="match status" value="1"/>
</dbReference>
<dbReference type="PANTHER" id="PTHR23410">
    <property type="entry name" value="RIBOSOMAL PROTEIN L5-RELATED"/>
    <property type="match status" value="1"/>
</dbReference>
<dbReference type="Pfam" id="PF17144">
    <property type="entry name" value="Ribosomal_L5e"/>
    <property type="match status" value="2"/>
</dbReference>
<dbReference type="PRINTS" id="PR00058">
    <property type="entry name" value="RIBOSOMALL5"/>
</dbReference>
<dbReference type="SUPFAM" id="SSF53137">
    <property type="entry name" value="Translational machinery components"/>
    <property type="match status" value="1"/>
</dbReference>
<reference key="1">
    <citation type="journal article" date="1997" name="J. Bacteriol.">
        <title>Complete genome sequence of Methanobacterium thermoautotrophicum deltaH: functional analysis and comparative genomics.</title>
        <authorList>
            <person name="Smith D.R."/>
            <person name="Doucette-Stamm L.A."/>
            <person name="Deloughery C."/>
            <person name="Lee H.-M."/>
            <person name="Dubois J."/>
            <person name="Aldredge T."/>
            <person name="Bashirzadeh R."/>
            <person name="Blakely D."/>
            <person name="Cook R."/>
            <person name="Gilbert K."/>
            <person name="Harrison D."/>
            <person name="Hoang L."/>
            <person name="Keagle P."/>
            <person name="Lumm W."/>
            <person name="Pothier B."/>
            <person name="Qiu D."/>
            <person name="Spadafora R."/>
            <person name="Vicare R."/>
            <person name="Wang Y."/>
            <person name="Wierzbowski J."/>
            <person name="Gibson R."/>
            <person name="Jiwani N."/>
            <person name="Caruso A."/>
            <person name="Bush D."/>
            <person name="Safer H."/>
            <person name="Patwell D."/>
            <person name="Prabhakar S."/>
            <person name="McDougall S."/>
            <person name="Shimer G."/>
            <person name="Goyal A."/>
            <person name="Pietrovski S."/>
            <person name="Church G.M."/>
            <person name="Daniels C.J."/>
            <person name="Mao J.-I."/>
            <person name="Rice P."/>
            <person name="Noelling J."/>
            <person name="Reeve J.N."/>
        </authorList>
    </citation>
    <scope>NUCLEOTIDE SEQUENCE [LARGE SCALE GENOMIC DNA]</scope>
    <source>
        <strain>ATCC 29096 / DSM 1053 / JCM 10044 / NBRC 100330 / Delta H</strain>
    </source>
</reference>
<accession>O26130</accession>
<keyword id="KW-1185">Reference proteome</keyword>
<keyword id="KW-0687">Ribonucleoprotein</keyword>
<keyword id="KW-0689">Ribosomal protein</keyword>
<keyword id="KW-0694">RNA-binding</keyword>
<keyword id="KW-0699">rRNA-binding</keyword>
<protein>
    <recommendedName>
        <fullName evidence="1">Large ribosomal subunit protein uL18</fullName>
    </recommendedName>
    <alternativeName>
        <fullName evidence="2">50S ribosomal protein L18</fullName>
    </alternativeName>
</protein>
<sequence>MAHGPRYKLAFRRRREGKTDYRARYKMVETGKSRLVVRITTYHVIAQIINVGMNGDETLVSAHSKQLQKMGWLGGTSNTAAAYLTGYLCGKRALKEGIEEAVLDIGLRPAIRGSKVFAALKGAVDAGLNVPHGESVLPDESRIRGEHIMEYAESLDEEELRKRFSKYLERGLSPVDLPEHFDEIKKRIDEEV</sequence>